<evidence type="ECO:0000255" key="1">
    <source>
        <dbReference type="PROSITE-ProRule" id="PRU00303"/>
    </source>
</evidence>
<evidence type="ECO:0000305" key="2"/>
<reference key="1">
    <citation type="submission" date="1997-03" db="EMBL/GenBank/DDBJ databases">
        <title>A 148 kbp sequence of the region between 35 and 47 degree of the Bacillus subtilis genome.</title>
        <authorList>
            <person name="Kasahara Y."/>
            <person name="Nakai S."/>
            <person name="Lee S."/>
            <person name="Sadaie Y."/>
            <person name="Ogasawara N."/>
        </authorList>
    </citation>
    <scope>NUCLEOTIDE SEQUENCE [GENOMIC DNA]</scope>
    <source>
        <strain>168</strain>
    </source>
</reference>
<reference key="2">
    <citation type="journal article" date="1997" name="Nature">
        <title>The complete genome sequence of the Gram-positive bacterium Bacillus subtilis.</title>
        <authorList>
            <person name="Kunst F."/>
            <person name="Ogasawara N."/>
            <person name="Moszer I."/>
            <person name="Albertini A.M."/>
            <person name="Alloni G."/>
            <person name="Azevedo V."/>
            <person name="Bertero M.G."/>
            <person name="Bessieres P."/>
            <person name="Bolotin A."/>
            <person name="Borchert S."/>
            <person name="Borriss R."/>
            <person name="Boursier L."/>
            <person name="Brans A."/>
            <person name="Braun M."/>
            <person name="Brignell S.C."/>
            <person name="Bron S."/>
            <person name="Brouillet S."/>
            <person name="Bruschi C.V."/>
            <person name="Caldwell B."/>
            <person name="Capuano V."/>
            <person name="Carter N.M."/>
            <person name="Choi S.-K."/>
            <person name="Codani J.-J."/>
            <person name="Connerton I.F."/>
            <person name="Cummings N.J."/>
            <person name="Daniel R.A."/>
            <person name="Denizot F."/>
            <person name="Devine K.M."/>
            <person name="Duesterhoeft A."/>
            <person name="Ehrlich S.D."/>
            <person name="Emmerson P.T."/>
            <person name="Entian K.-D."/>
            <person name="Errington J."/>
            <person name="Fabret C."/>
            <person name="Ferrari E."/>
            <person name="Foulger D."/>
            <person name="Fritz C."/>
            <person name="Fujita M."/>
            <person name="Fujita Y."/>
            <person name="Fuma S."/>
            <person name="Galizzi A."/>
            <person name="Galleron N."/>
            <person name="Ghim S.-Y."/>
            <person name="Glaser P."/>
            <person name="Goffeau A."/>
            <person name="Golightly E.J."/>
            <person name="Grandi G."/>
            <person name="Guiseppi G."/>
            <person name="Guy B.J."/>
            <person name="Haga K."/>
            <person name="Haiech J."/>
            <person name="Harwood C.R."/>
            <person name="Henaut A."/>
            <person name="Hilbert H."/>
            <person name="Holsappel S."/>
            <person name="Hosono S."/>
            <person name="Hullo M.-F."/>
            <person name="Itaya M."/>
            <person name="Jones L.-M."/>
            <person name="Joris B."/>
            <person name="Karamata D."/>
            <person name="Kasahara Y."/>
            <person name="Klaerr-Blanchard M."/>
            <person name="Klein C."/>
            <person name="Kobayashi Y."/>
            <person name="Koetter P."/>
            <person name="Koningstein G."/>
            <person name="Krogh S."/>
            <person name="Kumano M."/>
            <person name="Kurita K."/>
            <person name="Lapidus A."/>
            <person name="Lardinois S."/>
            <person name="Lauber J."/>
            <person name="Lazarevic V."/>
            <person name="Lee S.-M."/>
            <person name="Levine A."/>
            <person name="Liu H."/>
            <person name="Masuda S."/>
            <person name="Mauel C."/>
            <person name="Medigue C."/>
            <person name="Medina N."/>
            <person name="Mellado R.P."/>
            <person name="Mizuno M."/>
            <person name="Moestl D."/>
            <person name="Nakai S."/>
            <person name="Noback M."/>
            <person name="Noone D."/>
            <person name="O'Reilly M."/>
            <person name="Ogawa K."/>
            <person name="Ogiwara A."/>
            <person name="Oudega B."/>
            <person name="Park S.-H."/>
            <person name="Parro V."/>
            <person name="Pohl T.M."/>
            <person name="Portetelle D."/>
            <person name="Porwollik S."/>
            <person name="Prescott A.M."/>
            <person name="Presecan E."/>
            <person name="Pujic P."/>
            <person name="Purnelle B."/>
            <person name="Rapoport G."/>
            <person name="Rey M."/>
            <person name="Reynolds S."/>
            <person name="Rieger M."/>
            <person name="Rivolta C."/>
            <person name="Rocha E."/>
            <person name="Roche B."/>
            <person name="Rose M."/>
            <person name="Sadaie Y."/>
            <person name="Sato T."/>
            <person name="Scanlan E."/>
            <person name="Schleich S."/>
            <person name="Schroeter R."/>
            <person name="Scoffone F."/>
            <person name="Sekiguchi J."/>
            <person name="Sekowska A."/>
            <person name="Seror S.J."/>
            <person name="Serror P."/>
            <person name="Shin B.-S."/>
            <person name="Soldo B."/>
            <person name="Sorokin A."/>
            <person name="Tacconi E."/>
            <person name="Takagi T."/>
            <person name="Takahashi H."/>
            <person name="Takemaru K."/>
            <person name="Takeuchi M."/>
            <person name="Tamakoshi A."/>
            <person name="Tanaka T."/>
            <person name="Terpstra P."/>
            <person name="Tognoni A."/>
            <person name="Tosato V."/>
            <person name="Uchiyama S."/>
            <person name="Vandenbol M."/>
            <person name="Vannier F."/>
            <person name="Vassarotti A."/>
            <person name="Viari A."/>
            <person name="Wambutt R."/>
            <person name="Wedler E."/>
            <person name="Wedler H."/>
            <person name="Weitzenegger T."/>
            <person name="Winters P."/>
            <person name="Wipat A."/>
            <person name="Yamamoto H."/>
            <person name="Yamane K."/>
            <person name="Yasumoto K."/>
            <person name="Yata K."/>
            <person name="Yoshida K."/>
            <person name="Yoshikawa H.-F."/>
            <person name="Zumstein E."/>
            <person name="Yoshikawa H."/>
            <person name="Danchin A."/>
        </authorList>
    </citation>
    <scope>NUCLEOTIDE SEQUENCE [LARGE SCALE GENOMIC DNA]</scope>
    <source>
        <strain>168</strain>
    </source>
</reference>
<name>YDAJ_BACSU</name>
<dbReference type="EMBL" id="AB001488">
    <property type="protein sequence ID" value="BAA19264.1"/>
    <property type="status" value="ALT_INIT"/>
    <property type="molecule type" value="Genomic_DNA"/>
</dbReference>
<dbReference type="EMBL" id="AL009126">
    <property type="protein sequence ID" value="CAB12234.1"/>
    <property type="molecule type" value="Genomic_DNA"/>
</dbReference>
<dbReference type="PIR" id="A69769">
    <property type="entry name" value="A69769"/>
</dbReference>
<dbReference type="RefSeq" id="WP_003246551.1">
    <property type="nucleotide sequence ID" value="NZ_OZ025638.1"/>
</dbReference>
<dbReference type="SMR" id="O31486"/>
<dbReference type="FunCoup" id="O31486">
    <property type="interactions" value="107"/>
</dbReference>
<dbReference type="STRING" id="224308.BSU04270"/>
<dbReference type="PaxDb" id="224308-BSU04270"/>
<dbReference type="EnsemblBacteria" id="CAB12234">
    <property type="protein sequence ID" value="CAB12234"/>
    <property type="gene ID" value="BSU_04270"/>
</dbReference>
<dbReference type="GeneID" id="938245"/>
<dbReference type="KEGG" id="bsu:BSU04270"/>
<dbReference type="PATRIC" id="fig|224308.179.peg.453"/>
<dbReference type="eggNOG" id="COG3405">
    <property type="taxonomic scope" value="Bacteria"/>
</dbReference>
<dbReference type="InParanoid" id="O31486"/>
<dbReference type="OrthoDB" id="1779554at2"/>
<dbReference type="BioCyc" id="BSUB:BSU04270-MONOMER"/>
<dbReference type="Proteomes" id="UP000001570">
    <property type="component" value="Chromosome"/>
</dbReference>
<dbReference type="GO" id="GO:0005886">
    <property type="term" value="C:plasma membrane"/>
    <property type="evidence" value="ECO:0007669"/>
    <property type="project" value="UniProtKB-SubCell"/>
</dbReference>
<dbReference type="GO" id="GO:0005975">
    <property type="term" value="P:carbohydrate metabolic process"/>
    <property type="evidence" value="ECO:0007669"/>
    <property type="project" value="InterPro"/>
</dbReference>
<dbReference type="Gene3D" id="1.50.10.10">
    <property type="match status" value="1"/>
</dbReference>
<dbReference type="InterPro" id="IPR008928">
    <property type="entry name" value="6-hairpin_glycosidase_sf"/>
</dbReference>
<dbReference type="InterPro" id="IPR012341">
    <property type="entry name" value="6hp_glycosidase-like_sf"/>
</dbReference>
<dbReference type="SUPFAM" id="SSF48208">
    <property type="entry name" value="Six-hairpin glycosidases"/>
    <property type="match status" value="1"/>
</dbReference>
<dbReference type="PROSITE" id="PS51257">
    <property type="entry name" value="PROKAR_LIPOPROTEIN"/>
    <property type="match status" value="1"/>
</dbReference>
<keyword id="KW-1003">Cell membrane</keyword>
<keyword id="KW-0449">Lipoprotein</keyword>
<keyword id="KW-0472">Membrane</keyword>
<keyword id="KW-0564">Palmitate</keyword>
<keyword id="KW-1185">Reference proteome</keyword>
<keyword id="KW-0732">Signal</keyword>
<gene>
    <name type="primary">ydaJ</name>
    <name type="ordered locus">BSU04270</name>
</gene>
<comment type="subcellular location">
    <subcellularLocation>
        <location evidence="1">Cell membrane</location>
        <topology evidence="1">Lipid-anchor</topology>
    </subcellularLocation>
</comment>
<comment type="sequence caution" evidence="2">
    <conflict type="erroneous initiation">
        <sequence resource="EMBL-CDS" id="BAA19264"/>
    </conflict>
</comment>
<sequence length="362" mass="40998">MRHVLIAVILFFLSIGLSAGCAEAGNKTQNQSATEVNASPLQPAEYFIYHNLMNDKGLIKTDFSDQPSYLSESLGLWMEFLLSKNDAPHFQDQYQHLTDSFLMSNHLVTWKIQNGQASGTNALIDDMRIMLSLDQAAAKWGRSDYAQTARDIGTSLKTYNMNNGFFTDFYDSQAASKDVTLSYVMPDALAVLKKNGIIDEETEQRNANVLYSAPLKNGFLPKTYSSETKEYTYDSEINLIDQLYAAWHLPEGDEKASVLADWIKQEFQKNGKLYGRYSAYTKEPAVQYESPSVYALAVLFLTKQHENSSVIKAIYDRMNDFEIHDPVKSYYGGYMSGTQTHSFDNLLPLLAERKLFNENIIQ</sequence>
<proteinExistence type="inferred from homology"/>
<feature type="signal peptide" evidence="1">
    <location>
        <begin position="1"/>
        <end position="20"/>
    </location>
</feature>
<feature type="chain" id="PRO_0000384387" description="Putative lipoprotein YdaJ">
    <location>
        <begin position="21"/>
        <end position="362"/>
    </location>
</feature>
<feature type="lipid moiety-binding region" description="N-palmitoyl cysteine" evidence="1">
    <location>
        <position position="21"/>
    </location>
</feature>
<feature type="lipid moiety-binding region" description="S-diacylglycerol cysteine" evidence="1">
    <location>
        <position position="21"/>
    </location>
</feature>
<protein>
    <recommendedName>
        <fullName>Putative lipoprotein YdaJ</fullName>
    </recommendedName>
</protein>
<accession>O31486</accession>
<accession>P96584</accession>
<organism>
    <name type="scientific">Bacillus subtilis (strain 168)</name>
    <dbReference type="NCBI Taxonomy" id="224308"/>
    <lineage>
        <taxon>Bacteria</taxon>
        <taxon>Bacillati</taxon>
        <taxon>Bacillota</taxon>
        <taxon>Bacilli</taxon>
        <taxon>Bacillales</taxon>
        <taxon>Bacillaceae</taxon>
        <taxon>Bacillus</taxon>
    </lineage>
</organism>